<comment type="function">
    <text evidence="1">May function as a transcriptional repressor.</text>
</comment>
<comment type="interaction">
    <interactant intactId="EBI-8832437">
        <id>Q96F45</id>
    </interactant>
    <interactant intactId="EBI-948603">
        <id>Q03989</id>
        <label>ARID5A</label>
    </interactant>
    <organismsDiffer>false</organismsDiffer>
    <experiments>3</experiments>
</comment>
<comment type="interaction">
    <interactant intactId="EBI-8832437">
        <id>Q96F45</id>
    </interactant>
    <interactant intactId="EBI-11954292">
        <id>Q86V38</id>
        <label>ATN1</label>
    </interactant>
    <organismsDiffer>false</organismsDiffer>
    <experiments>3</experiments>
</comment>
<comment type="interaction">
    <interactant intactId="EBI-8832437">
        <id>Q96F45</id>
    </interactant>
    <interactant intactId="EBI-740376">
        <id>Q86UW9</id>
        <label>DTX2</label>
    </interactant>
    <organismsDiffer>false</organismsDiffer>
    <experiments>3</experiments>
</comment>
<comment type="interaction">
    <interactant intactId="EBI-8832437">
        <id>Q96F45</id>
    </interactant>
    <interactant intactId="EBI-1759806">
        <id>O75593</id>
        <label>FOXH1</label>
    </interactant>
    <organismsDiffer>false</organismsDiffer>
    <experiments>3</experiments>
</comment>
<comment type="interaction">
    <interactant intactId="EBI-8832437">
        <id>Q96F45</id>
    </interactant>
    <interactant intactId="EBI-12811111">
        <id>Q8IUB9</id>
        <label>KRTAP19-1</label>
    </interactant>
    <organismsDiffer>false</organismsDiffer>
    <experiments>3</experiments>
</comment>
<comment type="interaction">
    <interactant intactId="EBI-8832437">
        <id>Q96F45</id>
    </interactant>
    <interactant intactId="EBI-3957694">
        <id>Q9BYR6</id>
        <label>KRTAP3-3</label>
    </interactant>
    <organismsDiffer>false</organismsDiffer>
    <experiments>3</experiments>
</comment>
<comment type="interaction">
    <interactant intactId="EBI-8832437">
        <id>Q96F45</id>
    </interactant>
    <interactant intactId="EBI-11962084">
        <id>Q3LI66</id>
        <label>KRTAP6-2</label>
    </interactant>
    <organismsDiffer>false</organismsDiffer>
    <experiments>5</experiments>
</comment>
<comment type="interaction">
    <interactant intactId="EBI-8832437">
        <id>Q96F45</id>
    </interactant>
    <interactant intactId="EBI-9027467">
        <id>O75360</id>
        <label>PROP1</label>
    </interactant>
    <organismsDiffer>false</organismsDiffer>
    <experiments>3</experiments>
</comment>
<comment type="interaction">
    <interactant intactId="EBI-8832437">
        <id>Q96F45</id>
    </interactant>
    <interactant intactId="EBI-752030">
        <id>Q96A09</id>
        <label>TENT5B</label>
    </interactant>
    <organismsDiffer>false</organismsDiffer>
    <experiments>3</experiments>
</comment>
<comment type="interaction">
    <interactant intactId="EBI-8832437">
        <id>Q96F45</id>
    </interactant>
    <interactant intactId="EBI-11741437">
        <id>Q08117-2</id>
        <label>TLE5</label>
    </interactant>
    <organismsDiffer>false</organismsDiffer>
    <experiments>3</experiments>
</comment>
<comment type="interaction">
    <interactant intactId="EBI-8832437">
        <id>Q96F45</id>
    </interactant>
    <interactant intactId="EBI-25475877">
        <id>PRO_0000449627</id>
        <label>rep</label>
        <dbReference type="UniProtKB" id="P0DTD1"/>
    </interactant>
    <organismsDiffer>true</organismsDiffer>
    <experiments>3</experiments>
</comment>
<comment type="subcellular location">
    <subcellularLocation>
        <location evidence="1">Nucleus</location>
    </subcellularLocation>
</comment>
<comment type="alternative products">
    <event type="alternative splicing"/>
    <isoform>
        <id>Q96F45-1</id>
        <name>1</name>
        <sequence type="displayed"/>
    </isoform>
    <isoform>
        <id>Q96F45-2</id>
        <name>2</name>
        <sequence type="described" ref="VSP_026395"/>
    </isoform>
    <isoform>
        <id>Q96F45-3</id>
        <name>3</name>
        <sequence type="described" ref="VSP_026394"/>
    </isoform>
</comment>
<comment type="similarity">
    <text evidence="6">Belongs to the Elbow/Noc family.</text>
</comment>
<comment type="sequence caution" evidence="6">
    <conflict type="erroneous initiation">
        <sequence resource="EMBL-CDS" id="BAC03999"/>
    </conflict>
    <text>Truncated N-terminus.</text>
</comment>
<gene>
    <name type="primary">ZNF503</name>
    <name type="synonym">NOLZ1</name>
</gene>
<evidence type="ECO:0000250" key="1"/>
<evidence type="ECO:0000250" key="2">
    <source>
        <dbReference type="UniProtKB" id="Q7TMA2"/>
    </source>
</evidence>
<evidence type="ECO:0000255" key="3">
    <source>
        <dbReference type="PROSITE-ProRule" id="PRU00042"/>
    </source>
</evidence>
<evidence type="ECO:0000256" key="4">
    <source>
        <dbReference type="SAM" id="MobiDB-lite"/>
    </source>
</evidence>
<evidence type="ECO:0000303" key="5">
    <source>
    </source>
</evidence>
<evidence type="ECO:0000305" key="6"/>
<organism>
    <name type="scientific">Homo sapiens</name>
    <name type="common">Human</name>
    <dbReference type="NCBI Taxonomy" id="9606"/>
    <lineage>
        <taxon>Eukaryota</taxon>
        <taxon>Metazoa</taxon>
        <taxon>Chordata</taxon>
        <taxon>Craniata</taxon>
        <taxon>Vertebrata</taxon>
        <taxon>Euteleostomi</taxon>
        <taxon>Mammalia</taxon>
        <taxon>Eutheria</taxon>
        <taxon>Euarchontoglires</taxon>
        <taxon>Primates</taxon>
        <taxon>Haplorrhini</taxon>
        <taxon>Catarrhini</taxon>
        <taxon>Hominidae</taxon>
        <taxon>Homo</taxon>
    </lineage>
</organism>
<sequence>MSTAPSLSALRSSKHSGGGGGGGGGGGADPAWTSALSGNSSGPGPGSSPAGSTKPFVHAVPPSDPLRQANRLPIKVLKMLTARTGHILHPEYLQPLPSTPVSPIELDAKKSPLALLAQTCSQIGKPDPSPSSKLSSVASNGGGAGGAGGGAAGDKDTKSGPLKLSDIGVEDKSSFKPYSKPGSDKKEPGGGGGGGGGGGGGGGGVSSEKSGFRVPSATCQPFTPRTGSPSSSASACSPGGMLSSAGGAPEGKDDKKDTDVGGGGKGTGGASAEGGPTGLAHGRISCGGGINVDVNQHPDGGPGGKALGSDCGGSSGSSSGSGPSAPTSSSVLGSGLVAPVSPYKPGQTVFPLPPAGMTYPGSLAGAYAGYPPQFLPHGVALDPTKPGSLVGAQLAAAAAGSLGCSKPAGSSPLAGASPPSVMTASLCRDPYCLSYHCASHLAGAAAASASCAHDPAAAAAALKSGYPLVYPTHPLHGVHSSLTAAAAAGATPPSLAGHPLYPYGFMLPNDPLPHICNWVSANGPCDKRFATSEELLSHLRTHTAFPGTDKLLSGYPSSSSLASAAAAAMACHMHIPTSGAPGSPGTLALRSPHHALGLSSRYHPYSKSPLPTPGAPVPVPAATGPYYSPYALYGQRLTTASALGYQ</sequence>
<feature type="chain" id="PRO_0000292204" description="Zinc finger protein 503">
    <location>
        <begin position="1"/>
        <end position="646"/>
    </location>
</feature>
<feature type="zinc finger region" description="C2H2-type" evidence="3">
    <location>
        <begin position="514"/>
        <end position="542"/>
    </location>
</feature>
<feature type="region of interest" description="Disordered" evidence="4">
    <location>
        <begin position="1"/>
        <end position="70"/>
    </location>
</feature>
<feature type="region of interest" description="Disordered" evidence="4">
    <location>
        <begin position="121"/>
        <end position="332"/>
    </location>
</feature>
<feature type="compositionally biased region" description="Polar residues" evidence="4">
    <location>
        <begin position="1"/>
        <end position="11"/>
    </location>
</feature>
<feature type="compositionally biased region" description="Gly residues" evidence="4">
    <location>
        <begin position="16"/>
        <end position="28"/>
    </location>
</feature>
<feature type="compositionally biased region" description="Low complexity" evidence="4">
    <location>
        <begin position="34"/>
        <end position="52"/>
    </location>
</feature>
<feature type="compositionally biased region" description="Low complexity" evidence="4">
    <location>
        <begin position="130"/>
        <end position="139"/>
    </location>
</feature>
<feature type="compositionally biased region" description="Gly residues" evidence="4">
    <location>
        <begin position="140"/>
        <end position="152"/>
    </location>
</feature>
<feature type="compositionally biased region" description="Gly residues" evidence="4">
    <location>
        <begin position="189"/>
        <end position="205"/>
    </location>
</feature>
<feature type="compositionally biased region" description="Polar residues" evidence="4">
    <location>
        <begin position="217"/>
        <end position="226"/>
    </location>
</feature>
<feature type="compositionally biased region" description="Low complexity" evidence="4">
    <location>
        <begin position="227"/>
        <end position="240"/>
    </location>
</feature>
<feature type="compositionally biased region" description="Basic and acidic residues" evidence="4">
    <location>
        <begin position="250"/>
        <end position="259"/>
    </location>
</feature>
<feature type="compositionally biased region" description="Gly residues" evidence="4">
    <location>
        <begin position="260"/>
        <end position="277"/>
    </location>
</feature>
<feature type="compositionally biased region" description="Gly residues" evidence="4">
    <location>
        <begin position="300"/>
        <end position="315"/>
    </location>
</feature>
<feature type="compositionally biased region" description="Low complexity" evidence="4">
    <location>
        <begin position="316"/>
        <end position="330"/>
    </location>
</feature>
<feature type="modified residue" description="Phosphoserine" evidence="2">
    <location>
        <position position="102"/>
    </location>
</feature>
<feature type="modified residue" description="N6-acetyllysine" evidence="2">
    <location>
        <position position="209"/>
    </location>
</feature>
<feature type="modified residue" description="Phosphoserine" evidence="2">
    <location>
        <position position="231"/>
    </location>
</feature>
<feature type="modified residue" description="Phosphoserine" evidence="2">
    <location>
        <position position="237"/>
    </location>
</feature>
<feature type="modified residue" description="Omega-N-methylarginine" evidence="2">
    <location>
        <position position="636"/>
    </location>
</feature>
<feature type="splice variant" id="VSP_026394" description="In isoform 3." evidence="5">
    <location>
        <begin position="130"/>
        <end position="492"/>
    </location>
</feature>
<feature type="splice variant" id="VSP_026395" description="In isoform 2." evidence="5">
    <location>
        <begin position="233"/>
        <end position="269"/>
    </location>
</feature>
<feature type="sequence variant" id="VAR_032951" description="In dbSNP:rs35764982.">
    <original>N</original>
    <variation>K</variation>
    <location>
        <position position="509"/>
    </location>
</feature>
<accession>Q96F45</accession>
<accession>Q8NAC5</accession>
<accession>Q96E25</accession>
<accession>Q96IJ0</accession>
<protein>
    <recommendedName>
        <fullName>Zinc finger protein 503</fullName>
    </recommendedName>
</protein>
<name>ZN503_HUMAN</name>
<keyword id="KW-0007">Acetylation</keyword>
<keyword id="KW-0025">Alternative splicing</keyword>
<keyword id="KW-0479">Metal-binding</keyword>
<keyword id="KW-0488">Methylation</keyword>
<keyword id="KW-0539">Nucleus</keyword>
<keyword id="KW-0597">Phosphoprotein</keyword>
<keyword id="KW-1267">Proteomics identification</keyword>
<keyword id="KW-1185">Reference proteome</keyword>
<keyword id="KW-0678">Repressor</keyword>
<keyword id="KW-0804">Transcription</keyword>
<keyword id="KW-0805">Transcription regulation</keyword>
<keyword id="KW-0862">Zinc</keyword>
<keyword id="KW-0863">Zinc-finger</keyword>
<proteinExistence type="evidence at protein level"/>
<dbReference type="EMBL" id="BC007494">
    <property type="protein sequence ID" value="AAH07494.1"/>
    <property type="molecule type" value="mRNA"/>
</dbReference>
<dbReference type="EMBL" id="BC011625">
    <property type="protein sequence ID" value="AAH11625.1"/>
    <property type="molecule type" value="mRNA"/>
</dbReference>
<dbReference type="EMBL" id="BC013011">
    <property type="protein sequence ID" value="AAH13011.1"/>
    <property type="molecule type" value="mRNA"/>
</dbReference>
<dbReference type="EMBL" id="BC021165">
    <property type="protein sequence ID" value="AAH21165.1"/>
    <property type="molecule type" value="mRNA"/>
</dbReference>
<dbReference type="EMBL" id="AK092897">
    <property type="protein sequence ID" value="BAC03999.1"/>
    <property type="status" value="ALT_INIT"/>
    <property type="molecule type" value="mRNA"/>
</dbReference>
<dbReference type="CCDS" id="CCDS7350.1">
    <molecule id="Q96F45-1"/>
</dbReference>
<dbReference type="RefSeq" id="NP_116161.2">
    <molecule id="Q96F45-1"/>
    <property type="nucleotide sequence ID" value="NM_032772.5"/>
</dbReference>
<dbReference type="BioGRID" id="124306">
    <property type="interactions" value="63"/>
</dbReference>
<dbReference type="FunCoup" id="Q96F45">
    <property type="interactions" value="1258"/>
</dbReference>
<dbReference type="IntAct" id="Q96F45">
    <property type="interactions" value="41"/>
</dbReference>
<dbReference type="MINT" id="Q96F45"/>
<dbReference type="STRING" id="9606.ENSP00000361602"/>
<dbReference type="GlyGen" id="Q96F45">
    <property type="glycosylation" value="3 sites, 1 O-linked glycan (1 site)"/>
</dbReference>
<dbReference type="iPTMnet" id="Q96F45"/>
<dbReference type="PhosphoSitePlus" id="Q96F45"/>
<dbReference type="BioMuta" id="ZNF503"/>
<dbReference type="DMDM" id="74762652"/>
<dbReference type="jPOST" id="Q96F45"/>
<dbReference type="MassIVE" id="Q96F45"/>
<dbReference type="PaxDb" id="9606-ENSP00000361602"/>
<dbReference type="PeptideAtlas" id="Q96F45"/>
<dbReference type="ProteomicsDB" id="76493">
    <molecule id="Q96F45-1"/>
</dbReference>
<dbReference type="ProteomicsDB" id="76494">
    <molecule id="Q96F45-2"/>
</dbReference>
<dbReference type="ProteomicsDB" id="76495">
    <molecule id="Q96F45-3"/>
</dbReference>
<dbReference type="Pumba" id="Q96F45"/>
<dbReference type="Antibodypedia" id="29703">
    <property type="antibodies" value="147 antibodies from 21 providers"/>
</dbReference>
<dbReference type="DNASU" id="84858"/>
<dbReference type="Ensembl" id="ENST00000372524.5">
    <molecule id="Q96F45-1"/>
    <property type="protein sequence ID" value="ENSP00000361602.4"/>
    <property type="gene ID" value="ENSG00000165655.17"/>
</dbReference>
<dbReference type="GeneID" id="84858"/>
<dbReference type="KEGG" id="hsa:84858"/>
<dbReference type="MANE-Select" id="ENST00000372524.5">
    <property type="protein sequence ID" value="ENSP00000361602.4"/>
    <property type="RefSeq nucleotide sequence ID" value="NM_032772.6"/>
    <property type="RefSeq protein sequence ID" value="NP_116161.2"/>
</dbReference>
<dbReference type="UCSC" id="uc001jxg.4">
    <molecule id="Q96F45-1"/>
    <property type="organism name" value="human"/>
</dbReference>
<dbReference type="AGR" id="HGNC:23589"/>
<dbReference type="CTD" id="84858"/>
<dbReference type="DisGeNET" id="84858"/>
<dbReference type="GeneCards" id="ZNF503"/>
<dbReference type="HGNC" id="HGNC:23589">
    <property type="gene designation" value="ZNF503"/>
</dbReference>
<dbReference type="HPA" id="ENSG00000165655">
    <property type="expression patterns" value="Low tissue specificity"/>
</dbReference>
<dbReference type="MIM" id="613902">
    <property type="type" value="gene"/>
</dbReference>
<dbReference type="neXtProt" id="NX_Q96F45"/>
<dbReference type="OpenTargets" id="ENSG00000165655"/>
<dbReference type="PharmGKB" id="PA134904334"/>
<dbReference type="VEuPathDB" id="HostDB:ENSG00000165655"/>
<dbReference type="eggNOG" id="ENOG502QUYV">
    <property type="taxonomic scope" value="Eukaryota"/>
</dbReference>
<dbReference type="GeneTree" id="ENSGT00390000014618"/>
<dbReference type="HOGENOM" id="CLU_035082_1_0_1"/>
<dbReference type="InParanoid" id="Q96F45"/>
<dbReference type="OMA" id="SDICVAW"/>
<dbReference type="OrthoDB" id="10054079at2759"/>
<dbReference type="PAN-GO" id="Q96F45">
    <property type="GO annotations" value="2 GO annotations based on evolutionary models"/>
</dbReference>
<dbReference type="PhylomeDB" id="Q96F45"/>
<dbReference type="TreeFam" id="TF324968"/>
<dbReference type="PathwayCommons" id="Q96F45"/>
<dbReference type="SignaLink" id="Q96F45"/>
<dbReference type="SIGNOR" id="Q96F45"/>
<dbReference type="BioGRID-ORCS" id="84858">
    <property type="hits" value="20 hits in 1182 CRISPR screens"/>
</dbReference>
<dbReference type="ChiTaRS" id="ZNF503">
    <property type="organism name" value="human"/>
</dbReference>
<dbReference type="GenomeRNAi" id="84858"/>
<dbReference type="Pharos" id="Q96F45">
    <property type="development level" value="Tbio"/>
</dbReference>
<dbReference type="PRO" id="PR:Q96F45"/>
<dbReference type="Proteomes" id="UP000005640">
    <property type="component" value="Chromosome 10"/>
</dbReference>
<dbReference type="RNAct" id="Q96F45">
    <property type="molecule type" value="protein"/>
</dbReference>
<dbReference type="Bgee" id="ENSG00000165655">
    <property type="expression patterns" value="Expressed in renal medulla and 184 other cell types or tissues"/>
</dbReference>
<dbReference type="GO" id="GO:0005634">
    <property type="term" value="C:nucleus"/>
    <property type="evidence" value="ECO:0000318"/>
    <property type="project" value="GO_Central"/>
</dbReference>
<dbReference type="GO" id="GO:0008270">
    <property type="term" value="F:zinc ion binding"/>
    <property type="evidence" value="ECO:0007669"/>
    <property type="project" value="UniProtKB-KW"/>
</dbReference>
<dbReference type="GO" id="GO:0070315">
    <property type="term" value="P:G1 to G0 transition involved in cell differentiation"/>
    <property type="evidence" value="ECO:0000314"/>
    <property type="project" value="UniProtKB"/>
</dbReference>
<dbReference type="GO" id="GO:0008285">
    <property type="term" value="P:negative regulation of cell population proliferation"/>
    <property type="evidence" value="ECO:0000314"/>
    <property type="project" value="UniProtKB"/>
</dbReference>
<dbReference type="GO" id="GO:0045892">
    <property type="term" value="P:negative regulation of DNA-templated transcription"/>
    <property type="evidence" value="ECO:0000318"/>
    <property type="project" value="GO_Central"/>
</dbReference>
<dbReference type="GO" id="GO:0010629">
    <property type="term" value="P:negative regulation of gene expression"/>
    <property type="evidence" value="ECO:0000314"/>
    <property type="project" value="UniProtKB"/>
</dbReference>
<dbReference type="GO" id="GO:0061351">
    <property type="term" value="P:neural precursor cell proliferation"/>
    <property type="evidence" value="ECO:0007669"/>
    <property type="project" value="Ensembl"/>
</dbReference>
<dbReference type="FunFam" id="3.30.160.60:FF:000129">
    <property type="entry name" value="Zinc finger protein 503"/>
    <property type="match status" value="1"/>
</dbReference>
<dbReference type="Gene3D" id="3.30.160.60">
    <property type="entry name" value="Classic Zinc Finger"/>
    <property type="match status" value="1"/>
</dbReference>
<dbReference type="InterPro" id="IPR051520">
    <property type="entry name" value="Elbow/Noc_ZnFinger"/>
</dbReference>
<dbReference type="InterPro" id="IPR022129">
    <property type="entry name" value="Tscrpt_rep_NocA-like"/>
</dbReference>
<dbReference type="InterPro" id="IPR013087">
    <property type="entry name" value="Znf_C2H2_type"/>
</dbReference>
<dbReference type="PANTHER" id="PTHR12522:SF3">
    <property type="entry name" value="ZINC FINGER PROTEIN 503"/>
    <property type="match status" value="1"/>
</dbReference>
<dbReference type="PANTHER" id="PTHR12522">
    <property type="entry name" value="ZINC-FINGER PROTEIN NOLZ1-RELATED"/>
    <property type="match status" value="1"/>
</dbReference>
<dbReference type="Pfam" id="PF12402">
    <property type="entry name" value="nlz1"/>
    <property type="match status" value="1"/>
</dbReference>
<dbReference type="PROSITE" id="PS50157">
    <property type="entry name" value="ZINC_FINGER_C2H2_2"/>
    <property type="match status" value="1"/>
</dbReference>
<reference key="1">
    <citation type="journal article" date="2004" name="Genome Res.">
        <title>The status, quality, and expansion of the NIH full-length cDNA project: the Mammalian Gene Collection (MGC).</title>
        <authorList>
            <consortium name="The MGC Project Team"/>
        </authorList>
    </citation>
    <scope>NUCLEOTIDE SEQUENCE [LARGE SCALE MRNA] (ISOFORMS 1; 2 AND 3)</scope>
    <source>
        <tissue>Skin</tissue>
        <tissue>Uterus</tissue>
    </source>
</reference>
<reference key="2">
    <citation type="journal article" date="2004" name="Nat. Genet.">
        <title>Complete sequencing and characterization of 21,243 full-length human cDNAs.</title>
        <authorList>
            <person name="Ota T."/>
            <person name="Suzuki Y."/>
            <person name="Nishikawa T."/>
            <person name="Otsuki T."/>
            <person name="Sugiyama T."/>
            <person name="Irie R."/>
            <person name="Wakamatsu A."/>
            <person name="Hayashi K."/>
            <person name="Sato H."/>
            <person name="Nagai K."/>
            <person name="Kimura K."/>
            <person name="Makita H."/>
            <person name="Sekine M."/>
            <person name="Obayashi M."/>
            <person name="Nishi T."/>
            <person name="Shibahara T."/>
            <person name="Tanaka T."/>
            <person name="Ishii S."/>
            <person name="Yamamoto J."/>
            <person name="Saito K."/>
            <person name="Kawai Y."/>
            <person name="Isono Y."/>
            <person name="Nakamura Y."/>
            <person name="Nagahari K."/>
            <person name="Murakami K."/>
            <person name="Yasuda T."/>
            <person name="Iwayanagi T."/>
            <person name="Wagatsuma M."/>
            <person name="Shiratori A."/>
            <person name="Sudo H."/>
            <person name="Hosoiri T."/>
            <person name="Kaku Y."/>
            <person name="Kodaira H."/>
            <person name="Kondo H."/>
            <person name="Sugawara M."/>
            <person name="Takahashi M."/>
            <person name="Kanda K."/>
            <person name="Yokoi T."/>
            <person name="Furuya T."/>
            <person name="Kikkawa E."/>
            <person name="Omura Y."/>
            <person name="Abe K."/>
            <person name="Kamihara K."/>
            <person name="Katsuta N."/>
            <person name="Sato K."/>
            <person name="Tanikawa M."/>
            <person name="Yamazaki M."/>
            <person name="Ninomiya K."/>
            <person name="Ishibashi T."/>
            <person name="Yamashita H."/>
            <person name="Murakawa K."/>
            <person name="Fujimori K."/>
            <person name="Tanai H."/>
            <person name="Kimata M."/>
            <person name="Watanabe M."/>
            <person name="Hiraoka S."/>
            <person name="Chiba Y."/>
            <person name="Ishida S."/>
            <person name="Ono Y."/>
            <person name="Takiguchi S."/>
            <person name="Watanabe S."/>
            <person name="Yosida M."/>
            <person name="Hotuta T."/>
            <person name="Kusano J."/>
            <person name="Kanehori K."/>
            <person name="Takahashi-Fujii A."/>
            <person name="Hara H."/>
            <person name="Tanase T.-O."/>
            <person name="Nomura Y."/>
            <person name="Togiya S."/>
            <person name="Komai F."/>
            <person name="Hara R."/>
            <person name="Takeuchi K."/>
            <person name="Arita M."/>
            <person name="Imose N."/>
            <person name="Musashino K."/>
            <person name="Yuuki H."/>
            <person name="Oshima A."/>
            <person name="Sasaki N."/>
            <person name="Aotsuka S."/>
            <person name="Yoshikawa Y."/>
            <person name="Matsunawa H."/>
            <person name="Ichihara T."/>
            <person name="Shiohata N."/>
            <person name="Sano S."/>
            <person name="Moriya S."/>
            <person name="Momiyama H."/>
            <person name="Satoh N."/>
            <person name="Takami S."/>
            <person name="Terashima Y."/>
            <person name="Suzuki O."/>
            <person name="Nakagawa S."/>
            <person name="Senoh A."/>
            <person name="Mizoguchi H."/>
            <person name="Goto Y."/>
            <person name="Shimizu F."/>
            <person name="Wakebe H."/>
            <person name="Hishigaki H."/>
            <person name="Watanabe T."/>
            <person name="Sugiyama A."/>
            <person name="Takemoto M."/>
            <person name="Kawakami B."/>
            <person name="Yamazaki M."/>
            <person name="Watanabe K."/>
            <person name="Kumagai A."/>
            <person name="Itakura S."/>
            <person name="Fukuzumi Y."/>
            <person name="Fujimori Y."/>
            <person name="Komiyama M."/>
            <person name="Tashiro H."/>
            <person name="Tanigami A."/>
            <person name="Fujiwara T."/>
            <person name="Ono T."/>
            <person name="Yamada K."/>
            <person name="Fujii Y."/>
            <person name="Ozaki K."/>
            <person name="Hirao M."/>
            <person name="Ohmori Y."/>
            <person name="Kawabata A."/>
            <person name="Hikiji T."/>
            <person name="Kobatake N."/>
            <person name="Inagaki H."/>
            <person name="Ikema Y."/>
            <person name="Okamoto S."/>
            <person name="Okitani R."/>
            <person name="Kawakami T."/>
            <person name="Noguchi S."/>
            <person name="Itoh T."/>
            <person name="Shigeta K."/>
            <person name="Senba T."/>
            <person name="Matsumura K."/>
            <person name="Nakajima Y."/>
            <person name="Mizuno T."/>
            <person name="Morinaga M."/>
            <person name="Sasaki M."/>
            <person name="Togashi T."/>
            <person name="Oyama M."/>
            <person name="Hata H."/>
            <person name="Watanabe M."/>
            <person name="Komatsu T."/>
            <person name="Mizushima-Sugano J."/>
            <person name="Satoh T."/>
            <person name="Shirai Y."/>
            <person name="Takahashi Y."/>
            <person name="Nakagawa K."/>
            <person name="Okumura K."/>
            <person name="Nagase T."/>
            <person name="Nomura N."/>
            <person name="Kikuchi H."/>
            <person name="Masuho Y."/>
            <person name="Yamashita R."/>
            <person name="Nakai K."/>
            <person name="Yada T."/>
            <person name="Nakamura Y."/>
            <person name="Ohara O."/>
            <person name="Isogai T."/>
            <person name="Sugano S."/>
        </authorList>
    </citation>
    <scope>NUCLEOTIDE SEQUENCE [LARGE SCALE MRNA] OF 137-646 (ISOFORM 1)</scope>
    <source>
        <tissue>Spleen</tissue>
    </source>
</reference>
<reference key="3">
    <citation type="journal article" date="2009" name="Anal. Chem.">
        <title>Lys-N and trypsin cover complementary parts of the phosphoproteome in a refined SCX-based approach.</title>
        <authorList>
            <person name="Gauci S."/>
            <person name="Helbig A.O."/>
            <person name="Slijper M."/>
            <person name="Krijgsveld J."/>
            <person name="Heck A.J."/>
            <person name="Mohammed S."/>
        </authorList>
    </citation>
    <scope>IDENTIFICATION BY MASS SPECTROMETRY [LARGE SCALE ANALYSIS]</scope>
</reference>